<dbReference type="EC" id="5.3.1.5" evidence="1"/>
<dbReference type="EMBL" id="CU928158">
    <property type="protein sequence ID" value="CAQ91038.1"/>
    <property type="molecule type" value="Genomic_DNA"/>
</dbReference>
<dbReference type="RefSeq" id="WP_001149554.1">
    <property type="nucleotide sequence ID" value="NC_011740.1"/>
</dbReference>
<dbReference type="SMR" id="B7LTH9"/>
<dbReference type="GeneID" id="75059828"/>
<dbReference type="KEGG" id="efe:EFER_3566"/>
<dbReference type="HOGENOM" id="CLU_037261_1_0_6"/>
<dbReference type="OrthoDB" id="9763981at2"/>
<dbReference type="Proteomes" id="UP000000745">
    <property type="component" value="Chromosome"/>
</dbReference>
<dbReference type="GO" id="GO:0005737">
    <property type="term" value="C:cytoplasm"/>
    <property type="evidence" value="ECO:0007669"/>
    <property type="project" value="UniProtKB-SubCell"/>
</dbReference>
<dbReference type="GO" id="GO:0000287">
    <property type="term" value="F:magnesium ion binding"/>
    <property type="evidence" value="ECO:0007669"/>
    <property type="project" value="UniProtKB-UniRule"/>
</dbReference>
<dbReference type="GO" id="GO:0009045">
    <property type="term" value="F:xylose isomerase activity"/>
    <property type="evidence" value="ECO:0007669"/>
    <property type="project" value="UniProtKB-UniRule"/>
</dbReference>
<dbReference type="GO" id="GO:0042732">
    <property type="term" value="P:D-xylose metabolic process"/>
    <property type="evidence" value="ECO:0007669"/>
    <property type="project" value="UniProtKB-UniRule"/>
</dbReference>
<dbReference type="FunFam" id="3.20.20.150:FF:000002">
    <property type="entry name" value="Xylose isomerase"/>
    <property type="match status" value="1"/>
</dbReference>
<dbReference type="Gene3D" id="3.20.20.150">
    <property type="entry name" value="Divalent-metal-dependent TIM barrel enzymes"/>
    <property type="match status" value="1"/>
</dbReference>
<dbReference type="HAMAP" id="MF_00455">
    <property type="entry name" value="Xylose_isom_A"/>
    <property type="match status" value="1"/>
</dbReference>
<dbReference type="InterPro" id="IPR036237">
    <property type="entry name" value="Xyl_isomerase-like_sf"/>
</dbReference>
<dbReference type="InterPro" id="IPR013452">
    <property type="entry name" value="Xylose_isom_bac"/>
</dbReference>
<dbReference type="InterPro" id="IPR001998">
    <property type="entry name" value="Xylose_isomerase"/>
</dbReference>
<dbReference type="NCBIfam" id="NF003998">
    <property type="entry name" value="PRK05474.1"/>
    <property type="match status" value="1"/>
</dbReference>
<dbReference type="NCBIfam" id="TIGR02630">
    <property type="entry name" value="xylose_isom_A"/>
    <property type="match status" value="1"/>
</dbReference>
<dbReference type="PANTHER" id="PTHR48408">
    <property type="match status" value="1"/>
</dbReference>
<dbReference type="PANTHER" id="PTHR48408:SF1">
    <property type="entry name" value="XYLOSE ISOMERASE"/>
    <property type="match status" value="1"/>
</dbReference>
<dbReference type="PRINTS" id="PR00688">
    <property type="entry name" value="XYLOSISMRASE"/>
</dbReference>
<dbReference type="SUPFAM" id="SSF51658">
    <property type="entry name" value="Xylose isomerase-like"/>
    <property type="match status" value="1"/>
</dbReference>
<dbReference type="PROSITE" id="PS51415">
    <property type="entry name" value="XYLOSE_ISOMERASE"/>
    <property type="match status" value="1"/>
</dbReference>
<name>XYLA_ESCF3</name>
<evidence type="ECO:0000255" key="1">
    <source>
        <dbReference type="HAMAP-Rule" id="MF_00455"/>
    </source>
</evidence>
<proteinExistence type="inferred from homology"/>
<sequence length="440" mass="49742">MQAYFDQLDRVRYEGPKTTNPLAFRHYNPDELVLGKRMEDHLRFAACYWHTFCWNGADMFGVGAFDRPWQQPGEALMLAKRKADVAFEFFHKLNVPFYCFHDVDVSPEGASLKEYKNNFAEMVDVLAAKQEQSGVKLLWGTANCFTNPRYGAGAATNPDPEVFSWAATQVVTAMEATKRLGGENYVLWGGREGYETLLNTDLRQEREQLGRFMQMVVEHKHKIGFQGTLLIEPKPQEPTKHQYDYDAATVYGFLKQFGLEKEIKLNIEANHATLAGHSFHHEIATAIALGLFGSVDANRGDAQLGWDTDQFPNSVEENALVMYEILKAGGFTTGGLNFDAKVRRQSTDKYDLFYGHIGAMDTMALALKVAARMIEDGELDKRVAQRYSGWNSELGQQILKGQMSLSDLAKYAQDHNLSPVHQSGHQELLESLVNHYLFDK</sequence>
<protein>
    <recommendedName>
        <fullName evidence="1">Xylose isomerase</fullName>
        <ecNumber evidence="1">5.3.1.5</ecNumber>
    </recommendedName>
</protein>
<reference key="1">
    <citation type="journal article" date="2009" name="PLoS Genet.">
        <title>Organised genome dynamics in the Escherichia coli species results in highly diverse adaptive paths.</title>
        <authorList>
            <person name="Touchon M."/>
            <person name="Hoede C."/>
            <person name="Tenaillon O."/>
            <person name="Barbe V."/>
            <person name="Baeriswyl S."/>
            <person name="Bidet P."/>
            <person name="Bingen E."/>
            <person name="Bonacorsi S."/>
            <person name="Bouchier C."/>
            <person name="Bouvet O."/>
            <person name="Calteau A."/>
            <person name="Chiapello H."/>
            <person name="Clermont O."/>
            <person name="Cruveiller S."/>
            <person name="Danchin A."/>
            <person name="Diard M."/>
            <person name="Dossat C."/>
            <person name="Karoui M.E."/>
            <person name="Frapy E."/>
            <person name="Garry L."/>
            <person name="Ghigo J.M."/>
            <person name="Gilles A.M."/>
            <person name="Johnson J."/>
            <person name="Le Bouguenec C."/>
            <person name="Lescat M."/>
            <person name="Mangenot S."/>
            <person name="Martinez-Jehanne V."/>
            <person name="Matic I."/>
            <person name="Nassif X."/>
            <person name="Oztas S."/>
            <person name="Petit M.A."/>
            <person name="Pichon C."/>
            <person name="Rouy Z."/>
            <person name="Ruf C.S."/>
            <person name="Schneider D."/>
            <person name="Tourret J."/>
            <person name="Vacherie B."/>
            <person name="Vallenet D."/>
            <person name="Medigue C."/>
            <person name="Rocha E.P.C."/>
            <person name="Denamur E."/>
        </authorList>
    </citation>
    <scope>NUCLEOTIDE SEQUENCE [LARGE SCALE GENOMIC DNA]</scope>
    <source>
        <strain>ATCC 35469 / DSM 13698 / BCRC 15582 / CCUG 18766 / IAM 14443 / JCM 21226 / LMG 7866 / NBRC 102419 / NCTC 12128 / CDC 0568-73</strain>
    </source>
</reference>
<feature type="chain" id="PRO_1000200298" description="Xylose isomerase">
    <location>
        <begin position="1"/>
        <end position="440"/>
    </location>
</feature>
<feature type="active site" evidence="1">
    <location>
        <position position="101"/>
    </location>
</feature>
<feature type="active site" evidence="1">
    <location>
        <position position="104"/>
    </location>
</feature>
<feature type="binding site" evidence="1">
    <location>
        <position position="232"/>
    </location>
    <ligand>
        <name>Mg(2+)</name>
        <dbReference type="ChEBI" id="CHEBI:18420"/>
        <label>1</label>
    </ligand>
</feature>
<feature type="binding site" evidence="1">
    <location>
        <position position="268"/>
    </location>
    <ligand>
        <name>Mg(2+)</name>
        <dbReference type="ChEBI" id="CHEBI:18420"/>
        <label>1</label>
    </ligand>
</feature>
<feature type="binding site" evidence="1">
    <location>
        <position position="268"/>
    </location>
    <ligand>
        <name>Mg(2+)</name>
        <dbReference type="ChEBI" id="CHEBI:18420"/>
        <label>2</label>
    </ligand>
</feature>
<feature type="binding site" evidence="1">
    <location>
        <position position="271"/>
    </location>
    <ligand>
        <name>Mg(2+)</name>
        <dbReference type="ChEBI" id="CHEBI:18420"/>
        <label>2</label>
    </ligand>
</feature>
<feature type="binding site" evidence="1">
    <location>
        <position position="296"/>
    </location>
    <ligand>
        <name>Mg(2+)</name>
        <dbReference type="ChEBI" id="CHEBI:18420"/>
        <label>1</label>
    </ligand>
</feature>
<feature type="binding site" evidence="1">
    <location>
        <position position="307"/>
    </location>
    <ligand>
        <name>Mg(2+)</name>
        <dbReference type="ChEBI" id="CHEBI:18420"/>
        <label>2</label>
    </ligand>
</feature>
<feature type="binding site" evidence="1">
    <location>
        <position position="309"/>
    </location>
    <ligand>
        <name>Mg(2+)</name>
        <dbReference type="ChEBI" id="CHEBI:18420"/>
        <label>2</label>
    </ligand>
</feature>
<feature type="binding site" evidence="1">
    <location>
        <position position="339"/>
    </location>
    <ligand>
        <name>Mg(2+)</name>
        <dbReference type="ChEBI" id="CHEBI:18420"/>
        <label>1</label>
    </ligand>
</feature>
<accession>B7LTH9</accession>
<gene>
    <name evidence="1" type="primary">xylA</name>
    <name type="ordered locus">EFER_3566</name>
</gene>
<keyword id="KW-0119">Carbohydrate metabolism</keyword>
<keyword id="KW-0963">Cytoplasm</keyword>
<keyword id="KW-0413">Isomerase</keyword>
<keyword id="KW-0460">Magnesium</keyword>
<keyword id="KW-0479">Metal-binding</keyword>
<keyword id="KW-0859">Xylose metabolism</keyword>
<comment type="catalytic activity">
    <reaction evidence="1">
        <text>alpha-D-xylose = alpha-D-xylulofuranose</text>
        <dbReference type="Rhea" id="RHEA:22816"/>
        <dbReference type="ChEBI" id="CHEBI:28518"/>
        <dbReference type="ChEBI" id="CHEBI:188998"/>
        <dbReference type="EC" id="5.3.1.5"/>
    </reaction>
</comment>
<comment type="cofactor">
    <cofactor evidence="1">
        <name>Mg(2+)</name>
        <dbReference type="ChEBI" id="CHEBI:18420"/>
    </cofactor>
    <text evidence="1">Binds 2 magnesium ions per subunit.</text>
</comment>
<comment type="subunit">
    <text evidence="1">Homotetramer.</text>
</comment>
<comment type="subcellular location">
    <subcellularLocation>
        <location evidence="1">Cytoplasm</location>
    </subcellularLocation>
</comment>
<comment type="similarity">
    <text evidence="1">Belongs to the xylose isomerase family.</text>
</comment>
<organism>
    <name type="scientific">Escherichia fergusonii (strain ATCC 35469 / DSM 13698 / CCUG 18766 / IAM 14443 / JCM 21226 / LMG 7866 / NBRC 102419 / NCTC 12128 / CDC 0568-73)</name>
    <dbReference type="NCBI Taxonomy" id="585054"/>
    <lineage>
        <taxon>Bacteria</taxon>
        <taxon>Pseudomonadati</taxon>
        <taxon>Pseudomonadota</taxon>
        <taxon>Gammaproteobacteria</taxon>
        <taxon>Enterobacterales</taxon>
        <taxon>Enterobacteriaceae</taxon>
        <taxon>Escherichia</taxon>
    </lineage>
</organism>